<keyword id="KW-0025">Alternative splicing</keyword>
<keyword id="KW-0238">DNA-binding</keyword>
<keyword id="KW-0488">Methylation</keyword>
<keyword id="KW-0539">Nucleus</keyword>
<keyword id="KW-1185">Reference proteome</keyword>
<keyword id="KW-0677">Repeat</keyword>
<keyword id="KW-0804">Transcription</keyword>
<keyword id="KW-0805">Transcription regulation</keyword>
<proteinExistence type="evidence at transcript level"/>
<feature type="chain" id="PRO_0000275900" description="Aryl hydrocarbon receptor nuclear translocator 2">
    <location>
        <begin position="1"/>
        <end position="712"/>
    </location>
</feature>
<feature type="domain" description="bHLH" evidence="4">
    <location>
        <begin position="63"/>
        <end position="116"/>
    </location>
</feature>
<feature type="domain" description="PAS 1" evidence="3">
    <location>
        <begin position="134"/>
        <end position="209"/>
    </location>
</feature>
<feature type="domain" description="PAS 2" evidence="3">
    <location>
        <begin position="323"/>
        <end position="393"/>
    </location>
</feature>
<feature type="domain" description="PAC">
    <location>
        <begin position="398"/>
        <end position="441"/>
    </location>
</feature>
<feature type="region of interest" description="Disordered" evidence="5">
    <location>
        <begin position="1"/>
        <end position="20"/>
    </location>
</feature>
<feature type="region of interest" description="Disordered" evidence="5">
    <location>
        <begin position="35"/>
        <end position="74"/>
    </location>
</feature>
<feature type="region of interest" description="Disordered" evidence="5">
    <location>
        <begin position="573"/>
        <end position="712"/>
    </location>
</feature>
<feature type="compositionally biased region" description="Basic and acidic residues" evidence="5">
    <location>
        <begin position="63"/>
        <end position="73"/>
    </location>
</feature>
<feature type="compositionally biased region" description="Low complexity" evidence="5">
    <location>
        <begin position="597"/>
        <end position="626"/>
    </location>
</feature>
<feature type="compositionally biased region" description="Low complexity" evidence="5">
    <location>
        <begin position="653"/>
        <end position="675"/>
    </location>
</feature>
<feature type="modified residue" description="Omega-N-methylarginine" evidence="1">
    <location>
        <position position="42"/>
    </location>
</feature>
<feature type="splice variant" id="VSP_022690" description="In isoform 2." evidence="6">
    <original>DMLPMPGDPTQGTGNYNIEDFADLGMFPPFSE</original>
    <variation>VNPASSAFS</variation>
    <location>
        <begin position="681"/>
        <end position="712"/>
    </location>
</feature>
<feature type="sequence conflict" description="In Ref. 2; ABB17190." evidence="7" ref="2">
    <original>L</original>
    <variation>P</variation>
    <location>
        <position position="456"/>
    </location>
</feature>
<name>ARNT2_RAT</name>
<organism>
    <name type="scientific">Rattus norvegicus</name>
    <name type="common">Rat</name>
    <dbReference type="NCBI Taxonomy" id="10116"/>
    <lineage>
        <taxon>Eukaryota</taxon>
        <taxon>Metazoa</taxon>
        <taxon>Chordata</taxon>
        <taxon>Craniata</taxon>
        <taxon>Vertebrata</taxon>
        <taxon>Euteleostomi</taxon>
        <taxon>Mammalia</taxon>
        <taxon>Eutheria</taxon>
        <taxon>Euarchontoglires</taxon>
        <taxon>Glires</taxon>
        <taxon>Rodentia</taxon>
        <taxon>Myomorpha</taxon>
        <taxon>Muroidea</taxon>
        <taxon>Muridae</taxon>
        <taxon>Murinae</taxon>
        <taxon>Rattus</taxon>
    </lineage>
</organism>
<evidence type="ECO:0000250" key="1">
    <source>
        <dbReference type="UniProtKB" id="Q61324"/>
    </source>
</evidence>
<evidence type="ECO:0000250" key="2">
    <source>
        <dbReference type="UniProtKB" id="Q9HBZ2"/>
    </source>
</evidence>
<evidence type="ECO:0000255" key="3">
    <source>
        <dbReference type="PROSITE-ProRule" id="PRU00140"/>
    </source>
</evidence>
<evidence type="ECO:0000255" key="4">
    <source>
        <dbReference type="PROSITE-ProRule" id="PRU00981"/>
    </source>
</evidence>
<evidence type="ECO:0000256" key="5">
    <source>
        <dbReference type="SAM" id="MobiDB-lite"/>
    </source>
</evidence>
<evidence type="ECO:0000303" key="6">
    <source>
    </source>
</evidence>
<evidence type="ECO:0000305" key="7"/>
<accession>Q78E60</accession>
<accession>Q30B64</accession>
<accession>Q63643</accession>
<accession>Q63646</accession>
<accession>Q80T24</accession>
<dbReference type="EMBL" id="U61157">
    <property type="protein sequence ID" value="AAB05247.1"/>
    <property type="status" value="ALT_INIT"/>
    <property type="molecule type" value="mRNA"/>
</dbReference>
<dbReference type="EMBL" id="U61405">
    <property type="protein sequence ID" value="AAB03666.1"/>
    <property type="molecule type" value="mRNA"/>
</dbReference>
<dbReference type="EMBL" id="AY264366">
    <property type="protein sequence ID" value="AAO89095.1"/>
    <property type="molecule type" value="mRNA"/>
</dbReference>
<dbReference type="EMBL" id="DQ223732">
    <property type="protein sequence ID" value="ABB17190.1"/>
    <property type="molecule type" value="mRNA"/>
</dbReference>
<dbReference type="RefSeq" id="NP_036913.3">
    <molecule id="Q78E60-1"/>
    <property type="nucleotide sequence ID" value="NM_012781.4"/>
</dbReference>
<dbReference type="RefSeq" id="XP_006229560.1">
    <molecule id="Q78E60-2"/>
    <property type="nucleotide sequence ID" value="XM_006229498.4"/>
</dbReference>
<dbReference type="SMR" id="Q78E60"/>
<dbReference type="FunCoup" id="Q78E60">
    <property type="interactions" value="2587"/>
</dbReference>
<dbReference type="STRING" id="10116.ENSRNOP00000017636"/>
<dbReference type="CarbonylDB" id="Q78E60"/>
<dbReference type="iPTMnet" id="Q78E60"/>
<dbReference type="PhosphoSitePlus" id="Q78E60"/>
<dbReference type="PaxDb" id="10116-ENSRNOP00000017636"/>
<dbReference type="Ensembl" id="ENSRNOT00000105581.1">
    <molecule id="Q78E60-1"/>
    <property type="protein sequence ID" value="ENSRNOP00000084711.1"/>
    <property type="gene ID" value="ENSRNOG00000063992.1"/>
</dbReference>
<dbReference type="Ensembl" id="ENSRNOT00000107318.1">
    <molecule id="Q78E60-1"/>
    <property type="protein sequence ID" value="ENSRNOP00000087722.1"/>
    <property type="gene ID" value="ENSRNOG00000013017.8"/>
</dbReference>
<dbReference type="GeneID" id="25243"/>
<dbReference type="KEGG" id="rno:25243"/>
<dbReference type="UCSC" id="RGD:2154">
    <molecule id="Q78E60-1"/>
    <property type="organism name" value="rat"/>
</dbReference>
<dbReference type="AGR" id="RGD:2154"/>
<dbReference type="CTD" id="9915"/>
<dbReference type="RGD" id="2154">
    <property type="gene designation" value="Arnt2"/>
</dbReference>
<dbReference type="eggNOG" id="KOG3561">
    <property type="taxonomic scope" value="Eukaryota"/>
</dbReference>
<dbReference type="GeneTree" id="ENSGT00940000158198"/>
<dbReference type="HOGENOM" id="CLU_011864_1_1_1"/>
<dbReference type="InParanoid" id="Q78E60"/>
<dbReference type="OMA" id="RVRKDCY"/>
<dbReference type="OrthoDB" id="71302at2759"/>
<dbReference type="PhylomeDB" id="Q78E60"/>
<dbReference type="TreeFam" id="TF319983"/>
<dbReference type="Reactome" id="R-RNO-211945">
    <property type="pathway name" value="Phase I - Functionalization of compounds"/>
</dbReference>
<dbReference type="Reactome" id="R-RNO-211976">
    <property type="pathway name" value="Endogenous sterols"/>
</dbReference>
<dbReference type="Reactome" id="R-RNO-211981">
    <property type="pathway name" value="Xenobiotics"/>
</dbReference>
<dbReference type="Reactome" id="R-RNO-8937144">
    <property type="pathway name" value="Aryl hydrocarbon receptor signalling"/>
</dbReference>
<dbReference type="Reactome" id="R-RNO-9768919">
    <property type="pathway name" value="NPAS4 regulates expression of target genes"/>
</dbReference>
<dbReference type="PRO" id="PR:Q78E60"/>
<dbReference type="Proteomes" id="UP000002494">
    <property type="component" value="Chromosome 1"/>
</dbReference>
<dbReference type="Bgee" id="ENSRNOG00000013017">
    <property type="expression patterns" value="Expressed in frontal cortex and 15 other cell types or tissues"/>
</dbReference>
<dbReference type="GO" id="GO:0034751">
    <property type="term" value="C:aryl hydrocarbon receptor complex"/>
    <property type="evidence" value="ECO:0000318"/>
    <property type="project" value="GO_Central"/>
</dbReference>
<dbReference type="GO" id="GO:0005737">
    <property type="term" value="C:cytoplasm"/>
    <property type="evidence" value="ECO:0007669"/>
    <property type="project" value="InterPro"/>
</dbReference>
<dbReference type="GO" id="GO:0005654">
    <property type="term" value="C:nucleoplasm"/>
    <property type="evidence" value="ECO:0007669"/>
    <property type="project" value="Ensembl"/>
</dbReference>
<dbReference type="GO" id="GO:0005634">
    <property type="term" value="C:nucleus"/>
    <property type="evidence" value="ECO:0000266"/>
    <property type="project" value="RGD"/>
</dbReference>
<dbReference type="GO" id="GO:0005667">
    <property type="term" value="C:transcription regulator complex"/>
    <property type="evidence" value="ECO:0000266"/>
    <property type="project" value="RGD"/>
</dbReference>
<dbReference type="GO" id="GO:0017162">
    <property type="term" value="F:aryl hydrocarbon receptor binding"/>
    <property type="evidence" value="ECO:0000266"/>
    <property type="project" value="RGD"/>
</dbReference>
<dbReference type="GO" id="GO:0001228">
    <property type="term" value="F:DNA-binding transcription activator activity, RNA polymerase II-specific"/>
    <property type="evidence" value="ECO:0000266"/>
    <property type="project" value="RGD"/>
</dbReference>
<dbReference type="GO" id="GO:0003700">
    <property type="term" value="F:DNA-binding transcription factor activity"/>
    <property type="evidence" value="ECO:0000266"/>
    <property type="project" value="RGD"/>
</dbReference>
<dbReference type="GO" id="GO:0000981">
    <property type="term" value="F:DNA-binding transcription factor activity, RNA polymerase II-specific"/>
    <property type="evidence" value="ECO:0000250"/>
    <property type="project" value="UniProtKB"/>
</dbReference>
<dbReference type="GO" id="GO:0046982">
    <property type="term" value="F:protein heterodimerization activity"/>
    <property type="evidence" value="ECO:0000266"/>
    <property type="project" value="RGD"/>
</dbReference>
<dbReference type="GO" id="GO:0044877">
    <property type="term" value="F:protein-containing complex binding"/>
    <property type="evidence" value="ECO:0000314"/>
    <property type="project" value="RGD"/>
</dbReference>
<dbReference type="GO" id="GO:0000978">
    <property type="term" value="F:RNA polymerase II cis-regulatory region sequence-specific DNA binding"/>
    <property type="evidence" value="ECO:0000266"/>
    <property type="project" value="RGD"/>
</dbReference>
<dbReference type="GO" id="GO:1990837">
    <property type="term" value="F:sequence-specific double-stranded DNA binding"/>
    <property type="evidence" value="ECO:0000266"/>
    <property type="project" value="RGD"/>
</dbReference>
<dbReference type="GO" id="GO:0007420">
    <property type="term" value="P:brain development"/>
    <property type="evidence" value="ECO:0000250"/>
    <property type="project" value="UniProtKB"/>
</dbReference>
<dbReference type="GO" id="GO:0007417">
    <property type="term" value="P:central nervous system development"/>
    <property type="evidence" value="ECO:0000266"/>
    <property type="project" value="RGD"/>
</dbReference>
<dbReference type="GO" id="GO:0001701">
    <property type="term" value="P:in utero embryonic development"/>
    <property type="evidence" value="ECO:0000266"/>
    <property type="project" value="RGD"/>
</dbReference>
<dbReference type="GO" id="GO:0043066">
    <property type="term" value="P:negative regulation of apoptotic process"/>
    <property type="evidence" value="ECO:0000315"/>
    <property type="project" value="RGD"/>
</dbReference>
<dbReference type="GO" id="GO:0008284">
    <property type="term" value="P:positive regulation of cell population proliferation"/>
    <property type="evidence" value="ECO:0000315"/>
    <property type="project" value="RGD"/>
</dbReference>
<dbReference type="GO" id="GO:0045893">
    <property type="term" value="P:positive regulation of DNA-templated transcription"/>
    <property type="evidence" value="ECO:0000266"/>
    <property type="project" value="RGD"/>
</dbReference>
<dbReference type="GO" id="GO:0045944">
    <property type="term" value="P:positive regulation of transcription by RNA polymerase II"/>
    <property type="evidence" value="ECO:0000250"/>
    <property type="project" value="UniProtKB"/>
</dbReference>
<dbReference type="GO" id="GO:0006355">
    <property type="term" value="P:regulation of DNA-templated transcription"/>
    <property type="evidence" value="ECO:0000266"/>
    <property type="project" value="RGD"/>
</dbReference>
<dbReference type="GO" id="GO:0006357">
    <property type="term" value="P:regulation of transcription by RNA polymerase II"/>
    <property type="evidence" value="ECO:0000318"/>
    <property type="project" value="GO_Central"/>
</dbReference>
<dbReference type="GO" id="GO:0032355">
    <property type="term" value="P:response to estradiol"/>
    <property type="evidence" value="ECO:0000270"/>
    <property type="project" value="RGD"/>
</dbReference>
<dbReference type="GO" id="GO:0001666">
    <property type="term" value="P:response to hypoxia"/>
    <property type="evidence" value="ECO:0000270"/>
    <property type="project" value="RGD"/>
</dbReference>
<dbReference type="CDD" id="cd18947">
    <property type="entry name" value="bHLH-PAS_ARNT"/>
    <property type="match status" value="1"/>
</dbReference>
<dbReference type="CDD" id="cd00130">
    <property type="entry name" value="PAS"/>
    <property type="match status" value="2"/>
</dbReference>
<dbReference type="FunFam" id="3.30.450.20:FF:000003">
    <property type="entry name" value="Aryl hydrocarbon receptor nuclear translocator 2"/>
    <property type="match status" value="1"/>
</dbReference>
<dbReference type="FunFam" id="3.30.450.20:FF:000020">
    <property type="entry name" value="Aryl hydrocarbon receptor nuclear translocator 2"/>
    <property type="match status" value="1"/>
</dbReference>
<dbReference type="FunFam" id="4.10.280.10:FF:000011">
    <property type="entry name" value="Aryl hydrocarbon receptor nuclear translocator 2"/>
    <property type="match status" value="1"/>
</dbReference>
<dbReference type="Gene3D" id="4.10.280.10">
    <property type="entry name" value="Helix-loop-helix DNA-binding domain"/>
    <property type="match status" value="1"/>
</dbReference>
<dbReference type="Gene3D" id="3.30.450.20">
    <property type="entry name" value="PAS domain"/>
    <property type="match status" value="2"/>
</dbReference>
<dbReference type="InterPro" id="IPR011598">
    <property type="entry name" value="bHLH_dom"/>
</dbReference>
<dbReference type="InterPro" id="IPR050933">
    <property type="entry name" value="Circadian_TF"/>
</dbReference>
<dbReference type="InterPro" id="IPR036638">
    <property type="entry name" value="HLH_DNA-bd_sf"/>
</dbReference>
<dbReference type="InterPro" id="IPR001067">
    <property type="entry name" value="Nuc_translocat"/>
</dbReference>
<dbReference type="InterPro" id="IPR001610">
    <property type="entry name" value="PAC"/>
</dbReference>
<dbReference type="InterPro" id="IPR000014">
    <property type="entry name" value="PAS"/>
</dbReference>
<dbReference type="InterPro" id="IPR035965">
    <property type="entry name" value="PAS-like_dom_sf"/>
</dbReference>
<dbReference type="InterPro" id="IPR013767">
    <property type="entry name" value="PAS_fold"/>
</dbReference>
<dbReference type="NCBIfam" id="TIGR00229">
    <property type="entry name" value="sensory_box"/>
    <property type="match status" value="1"/>
</dbReference>
<dbReference type="PANTHER" id="PTHR23042">
    <property type="entry name" value="CIRCADIAN PROTEIN CLOCK/ARNT/BMAL/PAS"/>
    <property type="match status" value="1"/>
</dbReference>
<dbReference type="Pfam" id="PF00010">
    <property type="entry name" value="HLH"/>
    <property type="match status" value="1"/>
</dbReference>
<dbReference type="Pfam" id="PF00989">
    <property type="entry name" value="PAS"/>
    <property type="match status" value="1"/>
</dbReference>
<dbReference type="Pfam" id="PF14598">
    <property type="entry name" value="PAS_11"/>
    <property type="match status" value="1"/>
</dbReference>
<dbReference type="PRINTS" id="PR00785">
    <property type="entry name" value="NCTRNSLOCATR"/>
</dbReference>
<dbReference type="SMART" id="SM00353">
    <property type="entry name" value="HLH"/>
    <property type="match status" value="1"/>
</dbReference>
<dbReference type="SMART" id="SM00086">
    <property type="entry name" value="PAC"/>
    <property type="match status" value="1"/>
</dbReference>
<dbReference type="SMART" id="SM00091">
    <property type="entry name" value="PAS"/>
    <property type="match status" value="2"/>
</dbReference>
<dbReference type="SUPFAM" id="SSF47459">
    <property type="entry name" value="HLH, helix-loop-helix DNA-binding domain"/>
    <property type="match status" value="1"/>
</dbReference>
<dbReference type="SUPFAM" id="SSF55785">
    <property type="entry name" value="PYP-like sensor domain (PAS domain)"/>
    <property type="match status" value="2"/>
</dbReference>
<dbReference type="PROSITE" id="PS50888">
    <property type="entry name" value="BHLH"/>
    <property type="match status" value="1"/>
</dbReference>
<dbReference type="PROSITE" id="PS50112">
    <property type="entry name" value="PAS"/>
    <property type="match status" value="2"/>
</dbReference>
<protein>
    <recommendedName>
        <fullName>Aryl hydrocarbon receptor nuclear translocator 2</fullName>
        <shortName>ARNT protein 2</shortName>
    </recommendedName>
</protein>
<reference key="1">
    <citation type="submission" date="1996-06" db="EMBL/GenBank/DDBJ databases">
        <title>Nucleotide sequence of rat Arnt2.</title>
        <authorList>
            <person name="Drutel G."/>
        </authorList>
    </citation>
    <scope>NUCLEOTIDE SEQUENCE [MRNA] (ISOFORM 1)</scope>
    <source>
        <strain>Sprague-Dawley</strain>
    </source>
</reference>
<reference key="2">
    <citation type="journal article" date="2003" name="Biochem. Biophys. Res. Commun.">
        <title>Identification of novel splice variants of ARNT and ARNT2 in the rat.</title>
        <authorList>
            <person name="Korkalainen M."/>
            <person name="Tuomisto J."/>
            <person name="Pohjanvirta R."/>
        </authorList>
    </citation>
    <scope>NUCLEOTIDE SEQUENCE [MRNA] (ISOFORM 2)</scope>
    <source>
        <strain>Long Evans</strain>
    </source>
</reference>
<reference key="3">
    <citation type="submission" date="2005-09" db="EMBL/GenBank/DDBJ databases">
        <title>Low potassium induces Arnt2 overexpression in cerebellar granule neurons.</title>
        <authorList>
            <person name="Linguang S."/>
            <person name="Wei Y."/>
            <person name="Yijun H."/>
            <person name="Wenfang C."/>
            <person name="Xingwen S."/>
            <person name="Pengxin Q."/>
            <person name="Guangmei Y."/>
        </authorList>
    </citation>
    <scope>NUCLEOTIDE SEQUENCE [MRNA] (ISOFORM 1)</scope>
    <source>
        <strain>Sprague-Dawley</strain>
        <tissue>Brain</tissue>
    </source>
</reference>
<comment type="function">
    <text evidence="2">Transcription factor that plays a role in the development of the hypothalamo-pituitary axis, postnatal brain growth, and visual and renal function. Specifically recognizes the xenobiotic response element (XRE).</text>
</comment>
<comment type="subunit">
    <text evidence="1 2">Efficient DNA binding requires dimerization with another bHLH protein (By similarity). Heterodimer with NPAS4 or SIM1 (By similarity). Heterodimer with the aryl hydrocarbon receptor (AHR) or the SIM1 protein (By similarity). Interacts with TACC3 (By similarity).</text>
</comment>
<comment type="subcellular location">
    <subcellularLocation>
        <location evidence="2 4">Nucleus</location>
    </subcellularLocation>
</comment>
<comment type="alternative products">
    <event type="alternative splicing"/>
    <isoform>
        <id>Q78E60-1</id>
        <name>1</name>
        <sequence type="displayed"/>
    </isoform>
    <isoform>
        <id>Q78E60-2</id>
        <name>2</name>
        <sequence type="described" ref="VSP_022690"/>
    </isoform>
</comment>
<comment type="sequence caution" evidence="7">
    <conflict type="erroneous initiation">
        <sequence resource="EMBL-CDS" id="AAB05247"/>
    </conflict>
</comment>
<gene>
    <name type="primary">Arnt2</name>
</gene>
<sequence>MATPAAVNPPEMASDIPGSVTLPVAPMAATGQVRMAGAMPARGGKRRSGMDFDDEDGEGPSKFSRENHSEIERRRRNKMTQYITELSDMVPTCSALARKPDKLTILRMAVSHMKSMRGTGNKSTDGAYKPSFLTEQELKHLILEAADGFLFVVAAETGRVIYVSDSVTPVLNQPQSEWFGSTLYEQVHPDDVEKLREQLCTSENSMTGRILDLKTGTVKKEGQQSSMRMCMGSRRSFICRMRCGNAPLDHLPLNRITTMRKRFRNGLGPVKEGEAQYAVVHCTGYIKAWPPAGMSIPEEDADVGQGSKYCLVAIGRLQVTSSPVCMDMSGMSVPTEFLSRHNSDGIITFVDPRCISVIGYQPQDLLGKDILEFCHPEDQSHLRESFQQVVKLKGQVLSVMYRFRTKNREWLLIRTSSFTFQNPYSDEIEYVICTNTNVKQLQQQQAELEVHQRDGLSSYDLSQVPVPNLPTGVHEAGKPVEKADAIFSQERDPRFAEMFAGISASEKKMMSSASASGSQQIYSQGSPFPAGHSGKAFSSSVVHVPGVNDIQSSSSTGQNISQISRQLNQGQVAWTGSRPPFPGQPSKTQSSAFGIGSSHPYPADPSSYSPLSSPAASSPSGNAYPSLANRTPGFAESGQSGGQFQGRPSEVWSQWQSQHHGQQSGEQHSHQQPGQTEVFQDMLPMPGDPTQGTGNYNIEDFADLGMFPPFSE</sequence>